<reference key="1">
    <citation type="journal article" date="2003" name="DNA Res.">
        <title>Structural analysis of four large plasmids harboring in a unicellular cyanobacterium, Synechocystis sp. PCC 6803.</title>
        <authorList>
            <person name="Kaneko T."/>
            <person name="Nakamura Y."/>
            <person name="Sasamoto S."/>
            <person name="Watanabe A."/>
            <person name="Kohara M."/>
            <person name="Matsumoto M."/>
            <person name="Shimpo S."/>
            <person name="Yamada M."/>
            <person name="Tabata S."/>
        </authorList>
    </citation>
    <scope>NUCLEOTIDE SEQUENCE [LARGE SCALE GENOMIC DNA]</scope>
    <source>
        <strain>ATCC 27184 / PCC 6803 / Kazusa</strain>
    </source>
</reference>
<evidence type="ECO:0000255" key="1">
    <source>
        <dbReference type="HAMAP-Rule" id="MF_01471"/>
    </source>
</evidence>
<dbReference type="EC" id="3.1.-.-" evidence="1"/>
<dbReference type="EMBL" id="AP004311">
    <property type="protein sequence ID" value="BAD01995.1"/>
    <property type="molecule type" value="Genomic_DNA"/>
</dbReference>
<dbReference type="SMR" id="Q6ZEA5"/>
<dbReference type="EnsemblBacteria" id="BAD01995">
    <property type="protein sequence ID" value="BAD01995"/>
    <property type="gene ID" value="BAD01995"/>
</dbReference>
<dbReference type="KEGG" id="syn:ssr7093"/>
<dbReference type="InParanoid" id="Q6ZEA5"/>
<dbReference type="PhylomeDB" id="Q6ZEA5"/>
<dbReference type="Proteomes" id="UP000001425">
    <property type="component" value="Plasmid pSYSA"/>
</dbReference>
<dbReference type="GO" id="GO:0046872">
    <property type="term" value="F:metal ion binding"/>
    <property type="evidence" value="ECO:0007669"/>
    <property type="project" value="UniProtKB-UniRule"/>
</dbReference>
<dbReference type="GO" id="GO:0004521">
    <property type="term" value="F:RNA endonuclease activity"/>
    <property type="evidence" value="ECO:0007669"/>
    <property type="project" value="InterPro"/>
</dbReference>
<dbReference type="GO" id="GO:0051607">
    <property type="term" value="P:defense response to virus"/>
    <property type="evidence" value="ECO:0007669"/>
    <property type="project" value="UniProtKB-UniRule"/>
</dbReference>
<dbReference type="GO" id="GO:0043571">
    <property type="term" value="P:maintenance of CRISPR repeat elements"/>
    <property type="evidence" value="ECO:0007669"/>
    <property type="project" value="UniProtKB-UniRule"/>
</dbReference>
<dbReference type="CDD" id="cd09725">
    <property type="entry name" value="Cas2_I_II_III"/>
    <property type="match status" value="1"/>
</dbReference>
<dbReference type="Gene3D" id="3.30.70.240">
    <property type="match status" value="1"/>
</dbReference>
<dbReference type="HAMAP" id="MF_01471">
    <property type="entry name" value="Cas2"/>
    <property type="match status" value="1"/>
</dbReference>
<dbReference type="InterPro" id="IPR021127">
    <property type="entry name" value="CRISPR_associated_Cas2"/>
</dbReference>
<dbReference type="InterPro" id="IPR019199">
    <property type="entry name" value="Virulence_VapD/CRISPR_Cas2"/>
</dbReference>
<dbReference type="NCBIfam" id="TIGR01573">
    <property type="entry name" value="cas2"/>
    <property type="match status" value="1"/>
</dbReference>
<dbReference type="PANTHER" id="PTHR34405">
    <property type="entry name" value="CRISPR-ASSOCIATED ENDORIBONUCLEASE CAS2"/>
    <property type="match status" value="1"/>
</dbReference>
<dbReference type="PANTHER" id="PTHR34405:SF3">
    <property type="entry name" value="CRISPR-ASSOCIATED ENDORIBONUCLEASE CAS2 3"/>
    <property type="match status" value="1"/>
</dbReference>
<dbReference type="Pfam" id="PF09827">
    <property type="entry name" value="CRISPR_Cas2"/>
    <property type="match status" value="1"/>
</dbReference>
<dbReference type="PIRSF" id="PIRSF032582">
    <property type="entry name" value="Cas2"/>
    <property type="match status" value="1"/>
</dbReference>
<dbReference type="SUPFAM" id="SSF143430">
    <property type="entry name" value="TTP0101/SSO1404-like"/>
    <property type="match status" value="1"/>
</dbReference>
<geneLocation type="plasmid">
    <name>pSYSA</name>
</geneLocation>
<keyword id="KW-0051">Antiviral defense</keyword>
<keyword id="KW-0255">Endonuclease</keyword>
<keyword id="KW-0378">Hydrolase</keyword>
<keyword id="KW-0460">Magnesium</keyword>
<keyword id="KW-0479">Metal-binding</keyword>
<keyword id="KW-0540">Nuclease</keyword>
<keyword id="KW-0614">Plasmid</keyword>
<keyword id="KW-1185">Reference proteome</keyword>
<protein>
    <recommendedName>
        <fullName evidence="1">CRISPR-associated endoribonuclease Cas2 3</fullName>
        <ecNumber evidence="1">3.1.-.-</ecNumber>
    </recommendedName>
</protein>
<feature type="chain" id="PRO_0000417732" description="CRISPR-associated endoribonuclease Cas2 3">
    <location>
        <begin position="1"/>
        <end position="92"/>
    </location>
</feature>
<feature type="binding site" evidence="1">
    <location>
        <position position="9"/>
    </location>
    <ligand>
        <name>Mg(2+)</name>
        <dbReference type="ChEBI" id="CHEBI:18420"/>
        <note>catalytic</note>
    </ligand>
</feature>
<proteinExistence type="inferred from homology"/>
<gene>
    <name evidence="1" type="primary">cas2-3</name>
    <name type="ordered locus">ssr7093</name>
</gene>
<accession>Q6ZEA5</accession>
<sequence length="92" mass="10801">MFLYVIAYDIPDDRRRKKMADLLEGYGQRVQYSVFECTLSKSKFNELQKRLRKIYQSEEDSLRFYPLSGHTLTQVDIWGEPPLTKPPGSVIV</sequence>
<organism>
    <name type="scientific">Synechocystis sp. (strain ATCC 27184 / PCC 6803 / Kazusa)</name>
    <dbReference type="NCBI Taxonomy" id="1111708"/>
    <lineage>
        <taxon>Bacteria</taxon>
        <taxon>Bacillati</taxon>
        <taxon>Cyanobacteriota</taxon>
        <taxon>Cyanophyceae</taxon>
        <taxon>Synechococcales</taxon>
        <taxon>Merismopediaceae</taxon>
        <taxon>Synechocystis</taxon>
    </lineage>
</organism>
<name>CAS2C_SYNY3</name>
<comment type="function">
    <text evidence="1">CRISPR (clustered regularly interspaced short palindromic repeat), is an adaptive immune system that provides protection against mobile genetic elements (viruses, transposable elements and conjugative plasmids). CRISPR clusters contain sequences complementary to antecedent mobile elements and target invading nucleic acids. CRISPR clusters are transcribed and processed into CRISPR RNA (crRNA). Functions as a ssRNA-specific endoribonuclease. Involved in the integration of spacer DNA into the CRISPR cassette.</text>
</comment>
<comment type="cofactor">
    <cofactor evidence="1">
        <name>Mg(2+)</name>
        <dbReference type="ChEBI" id="CHEBI:18420"/>
    </cofactor>
</comment>
<comment type="subunit">
    <text evidence="1">Homodimer, forms a heterotetramer with a Cas1 homodimer.</text>
</comment>
<comment type="similarity">
    <text evidence="1">Belongs to the CRISPR-associated endoribonuclease Cas2 protein family.</text>
</comment>